<protein>
    <recommendedName>
        <fullName evidence="2">Small ribosomal subunit protein uS12</fullName>
    </recommendedName>
    <alternativeName>
        <fullName>30S ribosomal protein S12</fullName>
    </alternativeName>
</protein>
<evidence type="ECO:0000250" key="1"/>
<evidence type="ECO:0000305" key="2"/>
<keyword id="KW-0488">Methylation</keyword>
<keyword id="KW-0687">Ribonucleoprotein</keyword>
<keyword id="KW-0689">Ribosomal protein</keyword>
<keyword id="KW-0694">RNA-binding</keyword>
<keyword id="KW-0699">rRNA-binding</keyword>
<keyword id="KW-0820">tRNA-binding</keyword>
<feature type="initiator methionine" description="Removed" evidence="1">
    <location>
        <position position="1"/>
    </location>
</feature>
<feature type="chain" id="PRO_0000146281" description="Small ribosomal subunit protein uS12">
    <location>
        <begin position="2"/>
        <end position="124"/>
    </location>
</feature>
<feature type="modified residue" description="3-methylthioaspartic acid" evidence="1">
    <location>
        <position position="89"/>
    </location>
</feature>
<sequence length="124" mass="13749">MATINQLVRKPRVKKVVKSNVPALEACPQKRGVCTRVYTTTPKKPNSALRKVCRIRLTNGFEVTSYIGGEGHNLQEHSVVLIRGGRVKDLPGVRYHTVRGALDCAGVKDRKQGRSKYGVKRPKA</sequence>
<gene>
    <name type="primary">rpsL</name>
</gene>
<name>RS12_MANHA</name>
<comment type="function">
    <text evidence="1">With S4 and S5 plays an important role in translational accuracy.</text>
</comment>
<comment type="function">
    <text evidence="1">Interacts with and stabilizes bases of the 16S rRNA that are involved in tRNA selection in the A site and with the mRNA backbone. Located at the interface of the 30S and 50S subunits, it traverses the body of the 30S subunit contacting proteins on the other side and probably holding the rRNA structure together. The combined cluster of proteins S8, S12 and S17 appears to hold together the shoulder and platform of the 30S subunit (By similarity).</text>
</comment>
<comment type="subunit">
    <text evidence="1">Part of the 30S ribosomal subunit. Contacts proteins S8 and S17. May interact with IF1 in the 30S initiation complex (By similarity).</text>
</comment>
<comment type="similarity">
    <text evidence="2">Belongs to the universal ribosomal protein uS12 family.</text>
</comment>
<dbReference type="EMBL" id="AF160257">
    <property type="protein sequence ID" value="AAF24190.1"/>
    <property type="molecule type" value="Genomic_DNA"/>
</dbReference>
<dbReference type="RefSeq" id="WP_005543325.1">
    <property type="nucleotide sequence ID" value="NZ_VAJK01000040.1"/>
</dbReference>
<dbReference type="SMR" id="P63195"/>
<dbReference type="STRING" id="75985.WC39_02165"/>
<dbReference type="GeneID" id="93298548"/>
<dbReference type="PATRIC" id="fig|75985.40.peg.752"/>
<dbReference type="OrthoDB" id="9802366at2"/>
<dbReference type="GO" id="GO:0015935">
    <property type="term" value="C:small ribosomal subunit"/>
    <property type="evidence" value="ECO:0007669"/>
    <property type="project" value="InterPro"/>
</dbReference>
<dbReference type="GO" id="GO:0019843">
    <property type="term" value="F:rRNA binding"/>
    <property type="evidence" value="ECO:0007669"/>
    <property type="project" value="UniProtKB-UniRule"/>
</dbReference>
<dbReference type="GO" id="GO:0003735">
    <property type="term" value="F:structural constituent of ribosome"/>
    <property type="evidence" value="ECO:0007669"/>
    <property type="project" value="InterPro"/>
</dbReference>
<dbReference type="GO" id="GO:0000049">
    <property type="term" value="F:tRNA binding"/>
    <property type="evidence" value="ECO:0007669"/>
    <property type="project" value="UniProtKB-UniRule"/>
</dbReference>
<dbReference type="GO" id="GO:0006412">
    <property type="term" value="P:translation"/>
    <property type="evidence" value="ECO:0007669"/>
    <property type="project" value="UniProtKB-UniRule"/>
</dbReference>
<dbReference type="CDD" id="cd03368">
    <property type="entry name" value="Ribosomal_S12"/>
    <property type="match status" value="1"/>
</dbReference>
<dbReference type="FunFam" id="2.40.50.140:FF:000001">
    <property type="entry name" value="30S ribosomal protein S12"/>
    <property type="match status" value="1"/>
</dbReference>
<dbReference type="Gene3D" id="2.40.50.140">
    <property type="entry name" value="Nucleic acid-binding proteins"/>
    <property type="match status" value="1"/>
</dbReference>
<dbReference type="HAMAP" id="MF_00403_B">
    <property type="entry name" value="Ribosomal_uS12_B"/>
    <property type="match status" value="1"/>
</dbReference>
<dbReference type="InterPro" id="IPR012340">
    <property type="entry name" value="NA-bd_OB-fold"/>
</dbReference>
<dbReference type="InterPro" id="IPR006032">
    <property type="entry name" value="Ribosomal_uS12"/>
</dbReference>
<dbReference type="InterPro" id="IPR005679">
    <property type="entry name" value="Ribosomal_uS12_bac"/>
</dbReference>
<dbReference type="NCBIfam" id="TIGR00981">
    <property type="entry name" value="rpsL_bact"/>
    <property type="match status" value="1"/>
</dbReference>
<dbReference type="PANTHER" id="PTHR11652">
    <property type="entry name" value="30S RIBOSOMAL PROTEIN S12 FAMILY MEMBER"/>
    <property type="match status" value="1"/>
</dbReference>
<dbReference type="Pfam" id="PF00164">
    <property type="entry name" value="Ribosom_S12_S23"/>
    <property type="match status" value="1"/>
</dbReference>
<dbReference type="PIRSF" id="PIRSF002133">
    <property type="entry name" value="Ribosomal_S12/S23"/>
    <property type="match status" value="1"/>
</dbReference>
<dbReference type="PRINTS" id="PR01034">
    <property type="entry name" value="RIBOSOMALS12"/>
</dbReference>
<dbReference type="SUPFAM" id="SSF50249">
    <property type="entry name" value="Nucleic acid-binding proteins"/>
    <property type="match status" value="1"/>
</dbReference>
<dbReference type="PROSITE" id="PS00055">
    <property type="entry name" value="RIBOSOMAL_S12"/>
    <property type="match status" value="1"/>
</dbReference>
<organism>
    <name type="scientific">Mannheimia haemolytica</name>
    <name type="common">Pasteurella haemolytica</name>
    <dbReference type="NCBI Taxonomy" id="75985"/>
    <lineage>
        <taxon>Bacteria</taxon>
        <taxon>Pseudomonadati</taxon>
        <taxon>Pseudomonadota</taxon>
        <taxon>Gammaproteobacteria</taxon>
        <taxon>Pasteurellales</taxon>
        <taxon>Pasteurellaceae</taxon>
        <taxon>Mannheimia</taxon>
    </lineage>
</organism>
<proteinExistence type="inferred from homology"/>
<accession>P63195</accession>
<accession>P44412</accession>
<reference key="1">
    <citation type="submission" date="1999-06" db="EMBL/GenBank/DDBJ databases">
        <title>Isolation and characterization of the Pasteurella haemolytica rpsl gene.</title>
        <authorList>
            <person name="Lombard C.A."/>
            <person name="Prideaux C.T."/>
        </authorList>
    </citation>
    <scope>NUCLEOTIDE SEQUENCE [GENOMIC DNA]</scope>
    <source>
        <strain>Serotype A1</strain>
    </source>
</reference>